<gene>
    <name evidence="1" type="primary">petD</name>
    <name type="ordered locus">PMT9312_0332</name>
</gene>
<accession>Q31CK2</accession>
<name>PETD_PROM9</name>
<feature type="chain" id="PRO_0000255575" description="Cytochrome b6-f complex subunit 4">
    <location>
        <begin position="1"/>
        <end position="160"/>
    </location>
</feature>
<feature type="transmembrane region" description="Helical" evidence="1">
    <location>
        <begin position="36"/>
        <end position="56"/>
    </location>
</feature>
<feature type="transmembrane region" description="Helical" evidence="1">
    <location>
        <begin position="95"/>
        <end position="115"/>
    </location>
</feature>
<feature type="transmembrane region" description="Helical" evidence="1">
    <location>
        <begin position="128"/>
        <end position="148"/>
    </location>
</feature>
<organism>
    <name type="scientific">Prochlorococcus marinus (strain MIT 9312)</name>
    <dbReference type="NCBI Taxonomy" id="74546"/>
    <lineage>
        <taxon>Bacteria</taxon>
        <taxon>Bacillati</taxon>
        <taxon>Cyanobacteriota</taxon>
        <taxon>Cyanophyceae</taxon>
        <taxon>Synechococcales</taxon>
        <taxon>Prochlorococcaceae</taxon>
        <taxon>Prochlorococcus</taxon>
    </lineage>
</organism>
<proteinExistence type="inferred from homology"/>
<sequence length="160" mass="17689">MSTLKKPDLSDPKLRAKLAKGMGHNYYGEPAWPNDLLYIFPVVILGTIACVVGLAVLDPAMLGDKANPFATPLEILPEWYLYPVFQILRVVPNKLLGIALQTLIPLGLMILPFIENVNKFSNPFRRPIAMSLFLFGTFLTIYLGIGACLPIDKSLTLGLF</sequence>
<dbReference type="EMBL" id="CP000111">
    <property type="protein sequence ID" value="ABB49393.1"/>
    <property type="molecule type" value="Genomic_DNA"/>
</dbReference>
<dbReference type="RefSeq" id="WP_011375893.1">
    <property type="nucleotide sequence ID" value="NC_007577.1"/>
</dbReference>
<dbReference type="SMR" id="Q31CK2"/>
<dbReference type="STRING" id="74546.PMT9312_0332"/>
<dbReference type="KEGG" id="pmi:PMT9312_0332"/>
<dbReference type="eggNOG" id="COG1290">
    <property type="taxonomic scope" value="Bacteria"/>
</dbReference>
<dbReference type="HOGENOM" id="CLU_112652_0_0_3"/>
<dbReference type="OrthoDB" id="529454at2"/>
<dbReference type="Proteomes" id="UP000002715">
    <property type="component" value="Chromosome"/>
</dbReference>
<dbReference type="GO" id="GO:0031676">
    <property type="term" value="C:plasma membrane-derived thylakoid membrane"/>
    <property type="evidence" value="ECO:0007669"/>
    <property type="project" value="UniProtKB-SubCell"/>
</dbReference>
<dbReference type="GO" id="GO:0045158">
    <property type="term" value="F:electron transporter, transferring electrons within cytochrome b6/f complex of photosystem II activity"/>
    <property type="evidence" value="ECO:0007669"/>
    <property type="project" value="UniProtKB-UniRule"/>
</dbReference>
<dbReference type="GO" id="GO:0045156">
    <property type="term" value="F:electron transporter, transferring electrons within the cyclic electron transport pathway of photosynthesis activity"/>
    <property type="evidence" value="ECO:0007669"/>
    <property type="project" value="InterPro"/>
</dbReference>
<dbReference type="GO" id="GO:0008121">
    <property type="term" value="F:ubiquinol-cytochrome-c reductase activity"/>
    <property type="evidence" value="ECO:0007669"/>
    <property type="project" value="TreeGrafter"/>
</dbReference>
<dbReference type="GO" id="GO:0009767">
    <property type="term" value="P:photosynthetic electron transport chain"/>
    <property type="evidence" value="ECO:0007669"/>
    <property type="project" value="InterPro"/>
</dbReference>
<dbReference type="CDD" id="cd00290">
    <property type="entry name" value="cytochrome_b_C"/>
    <property type="match status" value="1"/>
</dbReference>
<dbReference type="FunFam" id="1.10.287.980:FF:000001">
    <property type="entry name" value="Cytochrome b6-f complex subunit 4"/>
    <property type="match status" value="1"/>
</dbReference>
<dbReference type="FunFam" id="1.20.5.510:FF:000002">
    <property type="entry name" value="Cytochrome b6-f complex subunit 4"/>
    <property type="match status" value="1"/>
</dbReference>
<dbReference type="Gene3D" id="1.10.287.980">
    <property type="entry name" value="plastocyanin oxidoreductase"/>
    <property type="match status" value="1"/>
</dbReference>
<dbReference type="Gene3D" id="1.20.5.510">
    <property type="entry name" value="Single helix bin"/>
    <property type="match status" value="1"/>
</dbReference>
<dbReference type="HAMAP" id="MF_01344">
    <property type="entry name" value="Cytb6_f_subIV"/>
    <property type="match status" value="1"/>
</dbReference>
<dbReference type="InterPro" id="IPR005798">
    <property type="entry name" value="Cyt_b/b6_C"/>
</dbReference>
<dbReference type="InterPro" id="IPR036150">
    <property type="entry name" value="Cyt_b/b6_C_sf"/>
</dbReference>
<dbReference type="InterPro" id="IPR005870">
    <property type="entry name" value="Cyt_b6/f_cplx_suIV"/>
</dbReference>
<dbReference type="InterPro" id="IPR048260">
    <property type="entry name" value="Cytochrome_b_C_euk/bac"/>
</dbReference>
<dbReference type="NCBIfam" id="TIGR01156">
    <property type="entry name" value="cytb6_f_IV"/>
    <property type="match status" value="1"/>
</dbReference>
<dbReference type="PANTHER" id="PTHR19271">
    <property type="entry name" value="CYTOCHROME B"/>
    <property type="match status" value="1"/>
</dbReference>
<dbReference type="PANTHER" id="PTHR19271:SF41">
    <property type="entry name" value="CYTOCHROME B_B6 C-TERMINAL REGION PROFILE DOMAIN-CONTAINING PROTEIN"/>
    <property type="match status" value="1"/>
</dbReference>
<dbReference type="Pfam" id="PF00032">
    <property type="entry name" value="Cytochrom_B_C"/>
    <property type="match status" value="1"/>
</dbReference>
<dbReference type="PIRSF" id="PIRSF000033">
    <property type="entry name" value="B6f_17K"/>
    <property type="match status" value="1"/>
</dbReference>
<dbReference type="SUPFAM" id="SSF81648">
    <property type="entry name" value="a domain/subunit of cytochrome bc1 complex (Ubiquinol-cytochrome c reductase)"/>
    <property type="match status" value="1"/>
</dbReference>
<dbReference type="PROSITE" id="PS51003">
    <property type="entry name" value="CYTB_CTER"/>
    <property type="match status" value="1"/>
</dbReference>
<keyword id="KW-0249">Electron transport</keyword>
<keyword id="KW-0472">Membrane</keyword>
<keyword id="KW-0602">Photosynthesis</keyword>
<keyword id="KW-0793">Thylakoid</keyword>
<keyword id="KW-0812">Transmembrane</keyword>
<keyword id="KW-1133">Transmembrane helix</keyword>
<keyword id="KW-0813">Transport</keyword>
<protein>
    <recommendedName>
        <fullName evidence="1">Cytochrome b6-f complex subunit 4</fullName>
    </recommendedName>
    <alternativeName>
        <fullName evidence="1">17 kDa polypeptide</fullName>
    </alternativeName>
</protein>
<reference key="1">
    <citation type="journal article" date="2006" name="Science">
        <title>Genomic islands and the ecology and evolution of Prochlorococcus.</title>
        <authorList>
            <person name="Coleman M.L."/>
            <person name="Sullivan M.B."/>
            <person name="Martiny A.C."/>
            <person name="Steglich C."/>
            <person name="Barry K."/>
            <person name="Delong E.F."/>
            <person name="Chisholm S.W."/>
        </authorList>
    </citation>
    <scope>NUCLEOTIDE SEQUENCE [LARGE SCALE GENOMIC DNA]</scope>
    <source>
        <strain>MIT 9312</strain>
    </source>
</reference>
<evidence type="ECO:0000255" key="1">
    <source>
        <dbReference type="HAMAP-Rule" id="MF_01344"/>
    </source>
</evidence>
<comment type="function">
    <text evidence="1">Component of the cytochrome b6-f complex, which mediates electron transfer between photosystem II (PSII) and photosystem I (PSI), cyclic electron flow around PSI, and state transitions.</text>
</comment>
<comment type="subunit">
    <text evidence="1">The 4 large subunits of the cytochrome b6-f complex are cytochrome b6, subunit IV (17 kDa polypeptide, PetD), cytochrome f and the Rieske protein, while the 4 small subunits are PetG, PetL, PetM and PetN. The complex functions as a dimer.</text>
</comment>
<comment type="subcellular location">
    <subcellularLocation>
        <location evidence="1">Cellular thylakoid membrane</location>
        <topology evidence="1">Multi-pass membrane protein</topology>
    </subcellularLocation>
</comment>
<comment type="similarity">
    <text evidence="1">Belongs to the cytochrome b family. PetD subfamily.</text>
</comment>